<comment type="catalytic activity">
    <reaction evidence="4">
        <text>[(1-&gt;4)-alpha-D-galacturonosyl methyl ester](n) + n H2O = [(1-&gt;4)-alpha-D-galacturonosyl](n) + n methanol + n H(+)</text>
        <dbReference type="Rhea" id="RHEA:22380"/>
        <dbReference type="Rhea" id="RHEA-COMP:14570"/>
        <dbReference type="Rhea" id="RHEA-COMP:14573"/>
        <dbReference type="ChEBI" id="CHEBI:15377"/>
        <dbReference type="ChEBI" id="CHEBI:15378"/>
        <dbReference type="ChEBI" id="CHEBI:17790"/>
        <dbReference type="ChEBI" id="CHEBI:140522"/>
        <dbReference type="ChEBI" id="CHEBI:140523"/>
        <dbReference type="EC" id="3.1.1.11"/>
    </reaction>
</comment>
<comment type="activity regulation">
    <text evidence="4">Inhibited by PMEI.</text>
</comment>
<comment type="pathway">
    <text>Glycan metabolism; pectin degradation; 2-dehydro-3-deoxy-D-gluconate from pectin: step 1/5.</text>
</comment>
<comment type="PTM">
    <text>The N-glycans attached at Asn-75, Asn-275, Asn-290 and Asn-319 are complex oligosaccharides containing xylose, fucose, hexose and N-acetylglucosamine.</text>
</comment>
<comment type="similarity">
    <text evidence="2">Belongs to the pectinesterase family.</text>
</comment>
<sequence length="321" mass="35368">TAVTDIVPDVVVAKDGSGNFTTVGAAVAAAKDSSTARFVIYIKEGAYFEYVDVDKKKTNLMFIGDGIGKTWIKGNRSVVDGWTTFRSSTVAVVGTGFIARGISFENYAGPSKHQAVALRSGADFSAFYQCSFVGYQDTLYVHSLRQFYSECDVYGTIDFIFGNAAAVLQKCNLYARKPNENQKNIFTAQGRDDPNQNTGISILNCKVAAAADLIPVLSSFKTYLGRPWKEYSRTVFLLSQMESLIDPAGWLEWSGDFALTTLYYREYKNTGPGSNTTARVTWPGYAVTTNETEVIQFTVGNFIQGSQWLTSYNIPVYLNLT</sequence>
<reference evidence="5" key="1">
    <citation type="journal article" date="2008" name="Proteins">
        <title>The peculiar structural features of kiwi fruit pectin methylesterase: Amino acid sequence, oligosaccharides structure, and modeling of the interaction with its natural proteinaceous inhibitor.</title>
        <authorList>
            <person name="Ciardiello M.A."/>
            <person name="D'Avino R."/>
            <person name="Amoresano A."/>
            <person name="Tuppo L."/>
            <person name="Carpentieri A."/>
            <person name="Carratore V."/>
            <person name="Tamburrini M."/>
            <person name="Giovane A."/>
            <person name="Pucci P."/>
            <person name="Camardella L."/>
        </authorList>
    </citation>
    <scope>PROTEIN SEQUENCE</scope>
    <scope>CATALYTIC ACTIVITY</scope>
    <scope>ACTIVITY REGULATION</scope>
    <scope>GLYCOSYLATION AT ASN-75; ASN-275; ASN-290 AND ASN-319</scope>
    <scope>ACETYLATION AT THR-1</scope>
    <source>
        <tissue evidence="4">Fruit</tissue>
    </source>
</reference>
<protein>
    <recommendedName>
        <fullName>Pectinesterase</fullName>
        <shortName>PE</shortName>
        <ecNumber>3.1.1.11</ecNumber>
    </recommendedName>
    <alternativeName>
        <fullName>Pectin methylesterase</fullName>
    </alternativeName>
</protein>
<organism>
    <name type="scientific">Actinidia deliciosa</name>
    <name type="common">Kiwi</name>
    <dbReference type="NCBI Taxonomy" id="3627"/>
    <lineage>
        <taxon>Eukaryota</taxon>
        <taxon>Viridiplantae</taxon>
        <taxon>Streptophyta</taxon>
        <taxon>Embryophyta</taxon>
        <taxon>Tracheophyta</taxon>
        <taxon>Spermatophyta</taxon>
        <taxon>Magnoliopsida</taxon>
        <taxon>eudicotyledons</taxon>
        <taxon>Gunneridae</taxon>
        <taxon>Pentapetalae</taxon>
        <taxon>asterids</taxon>
        <taxon>Ericales</taxon>
        <taxon>Actinidiaceae</taxon>
        <taxon>Actinidia</taxon>
    </lineage>
</organism>
<evidence type="ECO:0000250" key="1"/>
<evidence type="ECO:0000255" key="2"/>
<evidence type="ECO:0000255" key="3">
    <source>
        <dbReference type="PROSITE-ProRule" id="PRU10040"/>
    </source>
</evidence>
<evidence type="ECO:0000269" key="4">
    <source>
    </source>
</evidence>
<evidence type="ECO:0000305" key="5"/>
<keyword id="KW-0007">Acetylation</keyword>
<keyword id="KW-0063">Aspartyl esterase</keyword>
<keyword id="KW-0961">Cell wall biogenesis/degradation</keyword>
<keyword id="KW-0903">Direct protein sequencing</keyword>
<keyword id="KW-1015">Disulfide bond</keyword>
<keyword id="KW-0325">Glycoprotein</keyword>
<keyword id="KW-0378">Hydrolase</keyword>
<feature type="chain" id="PRO_0000311723" description="Pectinesterase">
    <location>
        <begin position="1"/>
        <end position="321"/>
    </location>
</feature>
<feature type="active site" description="Proton donor" evidence="3">
    <location>
        <position position="137"/>
    </location>
</feature>
<feature type="active site" description="Nucleophile" evidence="3">
    <location>
        <position position="158"/>
    </location>
</feature>
<feature type="binding site" evidence="1">
    <location>
        <position position="84"/>
    </location>
    <ligand>
        <name>substrate</name>
    </ligand>
</feature>
<feature type="binding site" evidence="1">
    <location>
        <position position="114"/>
    </location>
    <ligand>
        <name>substrate</name>
    </ligand>
</feature>
<feature type="binding site" evidence="1">
    <location>
        <position position="226"/>
    </location>
    <ligand>
        <name>substrate</name>
    </ligand>
</feature>
<feature type="binding site" evidence="1">
    <location>
        <position position="228"/>
    </location>
    <ligand>
        <name>substrate</name>
    </ligand>
</feature>
<feature type="site" description="Not glycosylated">
    <location>
        <position position="19"/>
    </location>
</feature>
<feature type="site" description="Transition state stabilizer" evidence="1">
    <location>
        <position position="136"/>
    </location>
</feature>
<feature type="modified residue" description="N-acetylthreonine" evidence="4">
    <location>
        <position position="1"/>
    </location>
</feature>
<feature type="glycosylation site" description="N-linked (GlcNAc...) (complex) asparagine" evidence="4">
    <location>
        <position position="75"/>
    </location>
</feature>
<feature type="glycosylation site" description="N-linked (GlcNAc...) (complex) asparagine" evidence="4">
    <location>
        <position position="275"/>
    </location>
</feature>
<feature type="glycosylation site" description="N-linked (GlcNAc...) (complex) asparagine" evidence="4">
    <location>
        <position position="290"/>
    </location>
</feature>
<feature type="glycosylation site" description="N-linked (GlcNAc...) (complex) asparagine" evidence="4">
    <location>
        <position position="319"/>
    </location>
</feature>
<feature type="disulfide bond" evidence="1">
    <location>
        <begin position="151"/>
        <end position="171"/>
    </location>
</feature>
<accession>P85076</accession>
<proteinExistence type="evidence at protein level"/>
<name>PME_ACTDE</name>
<dbReference type="EC" id="3.1.1.11"/>
<dbReference type="SMR" id="P85076"/>
<dbReference type="Allergome" id="3547">
    <property type="allergen name" value="Act d 7"/>
</dbReference>
<dbReference type="Allergome" id="3976">
    <property type="allergen name" value="Act d 7.0101"/>
</dbReference>
<dbReference type="iPTMnet" id="P85076"/>
<dbReference type="BRENDA" id="3.1.1.11">
    <property type="organism ID" value="121"/>
</dbReference>
<dbReference type="UniPathway" id="UPA00545">
    <property type="reaction ID" value="UER00823"/>
</dbReference>
<dbReference type="GO" id="GO:0030599">
    <property type="term" value="F:pectinesterase activity"/>
    <property type="evidence" value="ECO:0007669"/>
    <property type="project" value="UniProtKB-EC"/>
</dbReference>
<dbReference type="GO" id="GO:0042545">
    <property type="term" value="P:cell wall modification"/>
    <property type="evidence" value="ECO:0007669"/>
    <property type="project" value="InterPro"/>
</dbReference>
<dbReference type="GO" id="GO:0045490">
    <property type="term" value="P:pectin catabolic process"/>
    <property type="evidence" value="ECO:0007669"/>
    <property type="project" value="UniProtKB-UniPathway"/>
</dbReference>
<dbReference type="FunFam" id="2.160.20.10:FF:000001">
    <property type="entry name" value="Pectinesterase"/>
    <property type="match status" value="1"/>
</dbReference>
<dbReference type="Gene3D" id="2.160.20.10">
    <property type="entry name" value="Single-stranded right-handed beta-helix, Pectin lyase-like"/>
    <property type="match status" value="1"/>
</dbReference>
<dbReference type="InterPro" id="IPR012334">
    <property type="entry name" value="Pectin_lyas_fold"/>
</dbReference>
<dbReference type="InterPro" id="IPR011050">
    <property type="entry name" value="Pectin_lyase_fold/virulence"/>
</dbReference>
<dbReference type="InterPro" id="IPR033131">
    <property type="entry name" value="Pectinesterase_Asp_AS"/>
</dbReference>
<dbReference type="InterPro" id="IPR000070">
    <property type="entry name" value="Pectinesterase_cat"/>
</dbReference>
<dbReference type="PANTHER" id="PTHR31707">
    <property type="entry name" value="PECTINESTERASE"/>
    <property type="match status" value="1"/>
</dbReference>
<dbReference type="Pfam" id="PF01095">
    <property type="entry name" value="Pectinesterase"/>
    <property type="match status" value="1"/>
</dbReference>
<dbReference type="SUPFAM" id="SSF51126">
    <property type="entry name" value="Pectin lyase-like"/>
    <property type="match status" value="1"/>
</dbReference>
<dbReference type="PROSITE" id="PS00503">
    <property type="entry name" value="PECTINESTERASE_2"/>
    <property type="match status" value="1"/>
</dbReference>